<sequence>MLSLSQSLDAQLRAAMQRAFPEADAGLDPQLASASKQEFGDFQANGALPLAKPLKQAPRQIATAIVEQLQADPAFTDLCLEPQIAGPGFINLTIRPERLAAEVSARLGDERLGVPAVSNAAPVVVDFSSPNIAKEMHVGHLRSTIIGDSLARVLEFRGHPVLRLNHVGDWGTQFGMLITHLKQVAPEALDTADAVDLGDLVAFYREAKKRFDDDEAFQSTSRDEVVKLQGGDPVSLKAWGLLCDQSRREFQKIYDRLDILLSERGESFYNPFLPAVIDGLKAAELLVTDDGAQCVFLEGVQGKDGKPLPVIVQKSDGGFNYATTDLAAIRYRFGAAPEGDGARRVVYVTDAGQANHFAGVFQVAERAGWIPDGARLEHVPFGLVQGEDGKKLKTRAGDTVRLRDLLDEAVERAETDLRSRLKEEERSESEEFIQHVAGTVGLAAVKYADLSQNRITNYQFSFDRMLALQGNTAPYLLYAVVRIAGIARKGGDLAATNAQLQFSEPQEWALVRELLKFDAVIAEVEEELLPNRLCSYLFELSQVFNRFYDQVPVLKADPEALASRLALCRLTADTLRLGLGLLGIATLDRM</sequence>
<comment type="catalytic activity">
    <reaction evidence="1">
        <text>tRNA(Arg) + L-arginine + ATP = L-arginyl-tRNA(Arg) + AMP + diphosphate</text>
        <dbReference type="Rhea" id="RHEA:20301"/>
        <dbReference type="Rhea" id="RHEA-COMP:9658"/>
        <dbReference type="Rhea" id="RHEA-COMP:9673"/>
        <dbReference type="ChEBI" id="CHEBI:30616"/>
        <dbReference type="ChEBI" id="CHEBI:32682"/>
        <dbReference type="ChEBI" id="CHEBI:33019"/>
        <dbReference type="ChEBI" id="CHEBI:78442"/>
        <dbReference type="ChEBI" id="CHEBI:78513"/>
        <dbReference type="ChEBI" id="CHEBI:456215"/>
        <dbReference type="EC" id="6.1.1.19"/>
    </reaction>
</comment>
<comment type="subunit">
    <text evidence="1">Monomer.</text>
</comment>
<comment type="subcellular location">
    <subcellularLocation>
        <location evidence="1">Cytoplasm</location>
    </subcellularLocation>
</comment>
<comment type="similarity">
    <text evidence="1">Belongs to the class-I aminoacyl-tRNA synthetase family.</text>
</comment>
<feature type="chain" id="PRO_0000242104" description="Arginine--tRNA ligase">
    <location>
        <begin position="1"/>
        <end position="590"/>
    </location>
</feature>
<feature type="short sequence motif" description="'HIGH' region">
    <location>
        <begin position="130"/>
        <end position="140"/>
    </location>
</feature>
<organism>
    <name type="scientific">Synechococcus sp. (strain CC9605)</name>
    <dbReference type="NCBI Taxonomy" id="110662"/>
    <lineage>
        <taxon>Bacteria</taxon>
        <taxon>Bacillati</taxon>
        <taxon>Cyanobacteriota</taxon>
        <taxon>Cyanophyceae</taxon>
        <taxon>Synechococcales</taxon>
        <taxon>Synechococcaceae</taxon>
        <taxon>Synechococcus</taxon>
    </lineage>
</organism>
<keyword id="KW-0030">Aminoacyl-tRNA synthetase</keyword>
<keyword id="KW-0067">ATP-binding</keyword>
<keyword id="KW-0963">Cytoplasm</keyword>
<keyword id="KW-0436">Ligase</keyword>
<keyword id="KW-0547">Nucleotide-binding</keyword>
<keyword id="KW-0648">Protein biosynthesis</keyword>
<reference key="1">
    <citation type="submission" date="2005-07" db="EMBL/GenBank/DDBJ databases">
        <title>Complete sequence of Synechococcus sp. CC9605.</title>
        <authorList>
            <consortium name="US DOE Joint Genome Institute"/>
            <person name="Copeland A."/>
            <person name="Lucas S."/>
            <person name="Lapidus A."/>
            <person name="Barry K."/>
            <person name="Detter J.C."/>
            <person name="Glavina T."/>
            <person name="Hammon N."/>
            <person name="Israni S."/>
            <person name="Pitluck S."/>
            <person name="Schmutz J."/>
            <person name="Martinez M."/>
            <person name="Larimer F."/>
            <person name="Land M."/>
            <person name="Kyrpides N."/>
            <person name="Ivanova N."/>
            <person name="Richardson P."/>
        </authorList>
    </citation>
    <scope>NUCLEOTIDE SEQUENCE [LARGE SCALE GENOMIC DNA]</scope>
    <source>
        <strain>CC9605</strain>
    </source>
</reference>
<name>SYR_SYNSC</name>
<gene>
    <name evidence="1" type="primary">argS</name>
    <name type="ordered locus">Syncc9605_2451</name>
</gene>
<evidence type="ECO:0000255" key="1">
    <source>
        <dbReference type="HAMAP-Rule" id="MF_00123"/>
    </source>
</evidence>
<accession>Q3AGU9</accession>
<proteinExistence type="inferred from homology"/>
<protein>
    <recommendedName>
        <fullName evidence="1">Arginine--tRNA ligase</fullName>
        <ecNumber evidence="1">6.1.1.19</ecNumber>
    </recommendedName>
    <alternativeName>
        <fullName evidence="1">Arginyl-tRNA synthetase</fullName>
        <shortName evidence="1">ArgRS</shortName>
    </alternativeName>
</protein>
<dbReference type="EC" id="6.1.1.19" evidence="1"/>
<dbReference type="EMBL" id="CP000110">
    <property type="protein sequence ID" value="ABB36183.1"/>
    <property type="molecule type" value="Genomic_DNA"/>
</dbReference>
<dbReference type="RefSeq" id="WP_011365379.1">
    <property type="nucleotide sequence ID" value="NC_007516.1"/>
</dbReference>
<dbReference type="SMR" id="Q3AGU9"/>
<dbReference type="STRING" id="110662.Syncc9605_2451"/>
<dbReference type="KEGG" id="syd:Syncc9605_2451"/>
<dbReference type="eggNOG" id="COG0018">
    <property type="taxonomic scope" value="Bacteria"/>
</dbReference>
<dbReference type="HOGENOM" id="CLU_006406_5_1_3"/>
<dbReference type="OrthoDB" id="9805987at2"/>
<dbReference type="GO" id="GO:0005737">
    <property type="term" value="C:cytoplasm"/>
    <property type="evidence" value="ECO:0007669"/>
    <property type="project" value="UniProtKB-SubCell"/>
</dbReference>
<dbReference type="GO" id="GO:0004814">
    <property type="term" value="F:arginine-tRNA ligase activity"/>
    <property type="evidence" value="ECO:0007669"/>
    <property type="project" value="UniProtKB-UniRule"/>
</dbReference>
<dbReference type="GO" id="GO:0005524">
    <property type="term" value="F:ATP binding"/>
    <property type="evidence" value="ECO:0007669"/>
    <property type="project" value="UniProtKB-UniRule"/>
</dbReference>
<dbReference type="GO" id="GO:0006420">
    <property type="term" value="P:arginyl-tRNA aminoacylation"/>
    <property type="evidence" value="ECO:0007669"/>
    <property type="project" value="UniProtKB-UniRule"/>
</dbReference>
<dbReference type="CDD" id="cd00671">
    <property type="entry name" value="ArgRS_core"/>
    <property type="match status" value="1"/>
</dbReference>
<dbReference type="FunFam" id="3.40.50.620:FF:000030">
    <property type="entry name" value="Arginine--tRNA ligase"/>
    <property type="match status" value="1"/>
</dbReference>
<dbReference type="FunFam" id="1.10.730.10:FF:000006">
    <property type="entry name" value="Arginyl-tRNA synthetase 2, mitochondrial"/>
    <property type="match status" value="1"/>
</dbReference>
<dbReference type="Gene3D" id="3.30.1360.70">
    <property type="entry name" value="Arginyl tRNA synthetase N-terminal domain"/>
    <property type="match status" value="1"/>
</dbReference>
<dbReference type="Gene3D" id="3.40.50.620">
    <property type="entry name" value="HUPs"/>
    <property type="match status" value="1"/>
</dbReference>
<dbReference type="Gene3D" id="1.10.730.10">
    <property type="entry name" value="Isoleucyl-tRNA Synthetase, Domain 1"/>
    <property type="match status" value="1"/>
</dbReference>
<dbReference type="HAMAP" id="MF_00123">
    <property type="entry name" value="Arg_tRNA_synth"/>
    <property type="match status" value="1"/>
</dbReference>
<dbReference type="InterPro" id="IPR001412">
    <property type="entry name" value="aa-tRNA-synth_I_CS"/>
</dbReference>
<dbReference type="InterPro" id="IPR001278">
    <property type="entry name" value="Arg-tRNA-ligase"/>
</dbReference>
<dbReference type="InterPro" id="IPR005148">
    <property type="entry name" value="Arg-tRNA-synth_N"/>
</dbReference>
<dbReference type="InterPro" id="IPR036695">
    <property type="entry name" value="Arg-tRNA-synth_N_sf"/>
</dbReference>
<dbReference type="InterPro" id="IPR035684">
    <property type="entry name" value="ArgRS_core"/>
</dbReference>
<dbReference type="InterPro" id="IPR008909">
    <property type="entry name" value="DALR_anticod-bd"/>
</dbReference>
<dbReference type="InterPro" id="IPR014729">
    <property type="entry name" value="Rossmann-like_a/b/a_fold"/>
</dbReference>
<dbReference type="InterPro" id="IPR009080">
    <property type="entry name" value="tRNAsynth_Ia_anticodon-bd"/>
</dbReference>
<dbReference type="NCBIfam" id="TIGR00456">
    <property type="entry name" value="argS"/>
    <property type="match status" value="1"/>
</dbReference>
<dbReference type="PANTHER" id="PTHR11956:SF5">
    <property type="entry name" value="ARGININE--TRNA LIGASE, CYTOPLASMIC"/>
    <property type="match status" value="1"/>
</dbReference>
<dbReference type="PANTHER" id="PTHR11956">
    <property type="entry name" value="ARGINYL-TRNA SYNTHETASE"/>
    <property type="match status" value="1"/>
</dbReference>
<dbReference type="Pfam" id="PF03485">
    <property type="entry name" value="Arg_tRNA_synt_N"/>
    <property type="match status" value="1"/>
</dbReference>
<dbReference type="Pfam" id="PF05746">
    <property type="entry name" value="DALR_1"/>
    <property type="match status" value="1"/>
</dbReference>
<dbReference type="Pfam" id="PF00750">
    <property type="entry name" value="tRNA-synt_1d"/>
    <property type="match status" value="1"/>
</dbReference>
<dbReference type="PRINTS" id="PR01038">
    <property type="entry name" value="TRNASYNTHARG"/>
</dbReference>
<dbReference type="SMART" id="SM01016">
    <property type="entry name" value="Arg_tRNA_synt_N"/>
    <property type="match status" value="1"/>
</dbReference>
<dbReference type="SMART" id="SM00836">
    <property type="entry name" value="DALR_1"/>
    <property type="match status" value="1"/>
</dbReference>
<dbReference type="SUPFAM" id="SSF47323">
    <property type="entry name" value="Anticodon-binding domain of a subclass of class I aminoacyl-tRNA synthetases"/>
    <property type="match status" value="1"/>
</dbReference>
<dbReference type="SUPFAM" id="SSF55190">
    <property type="entry name" value="Arginyl-tRNA synthetase (ArgRS), N-terminal 'additional' domain"/>
    <property type="match status" value="1"/>
</dbReference>
<dbReference type="SUPFAM" id="SSF52374">
    <property type="entry name" value="Nucleotidylyl transferase"/>
    <property type="match status" value="1"/>
</dbReference>
<dbReference type="PROSITE" id="PS00178">
    <property type="entry name" value="AA_TRNA_LIGASE_I"/>
    <property type="match status" value="1"/>
</dbReference>